<accession>P9WJX0</accession>
<accession>L0TB98</accession>
<accession>O53183</accession>
<accession>Q7D741</accession>
<protein>
    <recommendedName>
        <fullName>Uncharacterized MFS-type transporter MT2531</fullName>
    </recommendedName>
</protein>
<gene>
    <name type="ordered locus">MT2531</name>
</gene>
<proteinExistence type="inferred from homology"/>
<keyword id="KW-1003">Cell membrane</keyword>
<keyword id="KW-0472">Membrane</keyword>
<keyword id="KW-1185">Reference proteome</keyword>
<keyword id="KW-0812">Transmembrane</keyword>
<keyword id="KW-1133">Transmembrane helix</keyword>
<keyword id="KW-0813">Transport</keyword>
<organism>
    <name type="scientific">Mycobacterium tuberculosis (strain CDC 1551 / Oshkosh)</name>
    <dbReference type="NCBI Taxonomy" id="83331"/>
    <lineage>
        <taxon>Bacteria</taxon>
        <taxon>Bacillati</taxon>
        <taxon>Actinomycetota</taxon>
        <taxon>Actinomycetes</taxon>
        <taxon>Mycobacteriales</taxon>
        <taxon>Mycobacteriaceae</taxon>
        <taxon>Mycobacterium</taxon>
        <taxon>Mycobacterium tuberculosis complex</taxon>
    </lineage>
</organism>
<comment type="subcellular location">
    <subcellularLocation>
        <location evidence="2">Cell membrane</location>
        <topology evidence="2">Multi-pass membrane protein</topology>
    </subcellularLocation>
</comment>
<comment type="similarity">
    <text evidence="2">Belongs to the major facilitator superfamily.</text>
</comment>
<dbReference type="EMBL" id="AE000516">
    <property type="protein sequence ID" value="AAK46831.1"/>
    <property type="molecule type" value="Genomic_DNA"/>
</dbReference>
<dbReference type="PIR" id="G70864">
    <property type="entry name" value="G70864"/>
</dbReference>
<dbReference type="RefSeq" id="WP_003412631.1">
    <property type="nucleotide sequence ID" value="NZ_KK341227.1"/>
</dbReference>
<dbReference type="SMR" id="P9WJX0"/>
<dbReference type="KEGG" id="mtc:MT2531"/>
<dbReference type="PATRIC" id="fig|83331.31.peg.2732"/>
<dbReference type="HOGENOM" id="CLU_038484_0_0_11"/>
<dbReference type="Proteomes" id="UP000001020">
    <property type="component" value="Chromosome"/>
</dbReference>
<dbReference type="GO" id="GO:0005886">
    <property type="term" value="C:plasma membrane"/>
    <property type="evidence" value="ECO:0007669"/>
    <property type="project" value="UniProtKB-SubCell"/>
</dbReference>
<dbReference type="GO" id="GO:0022857">
    <property type="term" value="F:transmembrane transporter activity"/>
    <property type="evidence" value="ECO:0007669"/>
    <property type="project" value="InterPro"/>
</dbReference>
<dbReference type="Gene3D" id="1.20.1250.20">
    <property type="entry name" value="MFS general substrate transporter like domains"/>
    <property type="match status" value="2"/>
</dbReference>
<dbReference type="InterPro" id="IPR011701">
    <property type="entry name" value="MFS"/>
</dbReference>
<dbReference type="InterPro" id="IPR020846">
    <property type="entry name" value="MFS_dom"/>
</dbReference>
<dbReference type="InterPro" id="IPR036259">
    <property type="entry name" value="MFS_trans_sf"/>
</dbReference>
<dbReference type="PANTHER" id="PTHR23539:SF1">
    <property type="entry name" value="MAJOR FACILITATOR SUPERFAMILY (MFS) PROFILE DOMAIN-CONTAINING PROTEIN"/>
    <property type="match status" value="1"/>
</dbReference>
<dbReference type="PANTHER" id="PTHR23539">
    <property type="entry name" value="MFS TRANSPORTER"/>
    <property type="match status" value="1"/>
</dbReference>
<dbReference type="Pfam" id="PF07690">
    <property type="entry name" value="MFS_1"/>
    <property type="match status" value="1"/>
</dbReference>
<dbReference type="SUPFAM" id="SSF103473">
    <property type="entry name" value="MFS general substrate transporter"/>
    <property type="match status" value="1"/>
</dbReference>
<dbReference type="PROSITE" id="PS50850">
    <property type="entry name" value="MFS"/>
    <property type="match status" value="2"/>
</dbReference>
<name>Y2456_MYCTO</name>
<sequence>MSGTVVAVPPRVARALDLLNFSLADVRDGLGPYLSIYLLLIHDWDQASIGFVMAVGGIAAIVAQTPIGALVDRTTAKRALVVAGAVLVTAAAVAMPLFAGLYSISVLQAVTGIASSVFAPALAAITLGAVGPQFFARRIGRNEAFNHAGNASAAGATGALAYFFGPVVVFWVLAGMALISVLATLRIPPDAVDHDLARGMDHAPGEPHPQPSRFTVLAHNRELVIFGAAVVAFHFANAAMLPLVGELLALHNRDEGTALMSSCIVAAQVVMVPVAYVVGTRADAWGRKPIFLVGFAVLTARGFLYTLSDNSYWLVGVQLLDGIGAGIFGALFPLVVQDVTHGTGHFNISLGAVTTATGIGAALSNLVAGWIVVVAGYDAAFMSLGALAGAGFLLYLVAMPETVDSDVRVRSRPTLGGK</sequence>
<feature type="chain" id="PRO_0000427756" description="Uncharacterized MFS-type transporter MT2531">
    <location>
        <begin position="1"/>
        <end position="418"/>
    </location>
</feature>
<feature type="transmembrane region" description="Helical" evidence="1">
    <location>
        <begin position="51"/>
        <end position="71"/>
    </location>
</feature>
<feature type="transmembrane region" description="Helical" evidence="1">
    <location>
        <begin position="79"/>
        <end position="99"/>
    </location>
</feature>
<feature type="transmembrane region" description="Helical" evidence="1">
    <location>
        <begin position="110"/>
        <end position="130"/>
    </location>
</feature>
<feature type="transmembrane region" description="Helical" evidence="1">
    <location>
        <begin position="163"/>
        <end position="183"/>
    </location>
</feature>
<feature type="transmembrane region" description="Helical" evidence="1">
    <location>
        <begin position="224"/>
        <end position="244"/>
    </location>
</feature>
<feature type="transmembrane region" description="Helical" evidence="1">
    <location>
        <begin position="258"/>
        <end position="278"/>
    </location>
</feature>
<feature type="transmembrane region" description="Helical" evidence="1">
    <location>
        <begin position="289"/>
        <end position="309"/>
    </location>
</feature>
<feature type="transmembrane region" description="Helical" evidence="1">
    <location>
        <begin position="315"/>
        <end position="335"/>
    </location>
</feature>
<feature type="transmembrane region" description="Helical" evidence="1">
    <location>
        <begin position="356"/>
        <end position="376"/>
    </location>
</feature>
<feature type="transmembrane region" description="Helical" evidence="1">
    <location>
        <begin position="379"/>
        <end position="399"/>
    </location>
</feature>
<evidence type="ECO:0000255" key="1"/>
<evidence type="ECO:0000305" key="2"/>
<reference key="1">
    <citation type="journal article" date="2002" name="J. Bacteriol.">
        <title>Whole-genome comparison of Mycobacterium tuberculosis clinical and laboratory strains.</title>
        <authorList>
            <person name="Fleischmann R.D."/>
            <person name="Alland D."/>
            <person name="Eisen J.A."/>
            <person name="Carpenter L."/>
            <person name="White O."/>
            <person name="Peterson J.D."/>
            <person name="DeBoy R.T."/>
            <person name="Dodson R.J."/>
            <person name="Gwinn M.L."/>
            <person name="Haft D.H."/>
            <person name="Hickey E.K."/>
            <person name="Kolonay J.F."/>
            <person name="Nelson W.C."/>
            <person name="Umayam L.A."/>
            <person name="Ermolaeva M.D."/>
            <person name="Salzberg S.L."/>
            <person name="Delcher A."/>
            <person name="Utterback T.R."/>
            <person name="Weidman J.F."/>
            <person name="Khouri H.M."/>
            <person name="Gill J."/>
            <person name="Mikula A."/>
            <person name="Bishai W."/>
            <person name="Jacobs W.R. Jr."/>
            <person name="Venter J.C."/>
            <person name="Fraser C.M."/>
        </authorList>
    </citation>
    <scope>NUCLEOTIDE SEQUENCE [LARGE SCALE GENOMIC DNA]</scope>
    <source>
        <strain>CDC 1551 / Oshkosh</strain>
    </source>
</reference>